<keyword id="KW-0002">3D-structure</keyword>
<keyword id="KW-0007">Acetylation</keyword>
<keyword id="KW-0903">Direct protein sequencing</keyword>
<keyword id="KW-0488">Methylation</keyword>
<keyword id="KW-0507">mRNA processing</keyword>
<keyword id="KW-0508">mRNA splicing</keyword>
<keyword id="KW-0539">Nucleus</keyword>
<keyword id="KW-0597">Phosphoprotein</keyword>
<keyword id="KW-1267">Proteomics identification</keyword>
<keyword id="KW-1185">Reference proteome</keyword>
<keyword id="KW-0677">Repeat</keyword>
<keyword id="KW-0687">Ribonucleoprotein</keyword>
<keyword id="KW-0694">RNA-binding</keyword>
<keyword id="KW-0747">Spliceosome</keyword>
<gene>
    <name type="primary">SNRPA</name>
</gene>
<evidence type="ECO:0000255" key="1">
    <source>
        <dbReference type="PROSITE-ProRule" id="PRU00176"/>
    </source>
</evidence>
<evidence type="ECO:0000256" key="2">
    <source>
        <dbReference type="SAM" id="MobiDB-lite"/>
    </source>
</evidence>
<evidence type="ECO:0000269" key="3">
    <source>
    </source>
</evidence>
<evidence type="ECO:0000269" key="4">
    <source>
    </source>
</evidence>
<evidence type="ECO:0000269" key="5">
    <source>
    </source>
</evidence>
<evidence type="ECO:0000269" key="6">
    <source ref="4"/>
</evidence>
<evidence type="ECO:0000305" key="7"/>
<evidence type="ECO:0007744" key="8">
    <source>
    </source>
</evidence>
<evidence type="ECO:0007744" key="9">
    <source>
    </source>
</evidence>
<evidence type="ECO:0007744" key="10">
    <source>
    </source>
</evidence>
<evidence type="ECO:0007744" key="11">
    <source>
    </source>
</evidence>
<evidence type="ECO:0007744" key="12">
    <source>
    </source>
</evidence>
<evidence type="ECO:0007744" key="13">
    <source>
    </source>
</evidence>
<evidence type="ECO:0007829" key="14">
    <source>
        <dbReference type="PDB" id="1NU4"/>
    </source>
</evidence>
<evidence type="ECO:0007829" key="15">
    <source>
        <dbReference type="PDB" id="2U1A"/>
    </source>
</evidence>
<evidence type="ECO:0007829" key="16">
    <source>
        <dbReference type="PDB" id="3CUL"/>
    </source>
</evidence>
<evidence type="ECO:0007829" key="17">
    <source>
        <dbReference type="PDB" id="6XH2"/>
    </source>
</evidence>
<evidence type="ECO:0007829" key="18">
    <source>
        <dbReference type="PDB" id="6XH3"/>
    </source>
</evidence>
<evidence type="ECO:0007829" key="19">
    <source>
        <dbReference type="PDB" id="7AEP"/>
    </source>
</evidence>
<evidence type="ECO:0007829" key="20">
    <source>
        <dbReference type="PDB" id="7DLZ"/>
    </source>
</evidence>
<evidence type="ECO:0007829" key="21">
    <source>
        <dbReference type="PDB" id="8JY0"/>
    </source>
</evidence>
<organism>
    <name type="scientific">Homo sapiens</name>
    <name type="common">Human</name>
    <dbReference type="NCBI Taxonomy" id="9606"/>
    <lineage>
        <taxon>Eukaryota</taxon>
        <taxon>Metazoa</taxon>
        <taxon>Chordata</taxon>
        <taxon>Craniata</taxon>
        <taxon>Vertebrata</taxon>
        <taxon>Euteleostomi</taxon>
        <taxon>Mammalia</taxon>
        <taxon>Eutheria</taxon>
        <taxon>Euarchontoglires</taxon>
        <taxon>Primates</taxon>
        <taxon>Haplorrhini</taxon>
        <taxon>Catarrhini</taxon>
        <taxon>Hominidae</taxon>
        <taxon>Homo</taxon>
    </lineage>
</organism>
<reference key="1">
    <citation type="journal article" date="1991" name="Gene">
        <title>Structure, chromosomal localization and evolutionary conservation of the gene encoding human U1 snRNP-specific A protein.</title>
        <authorList>
            <person name="Nelissen R.L.H."/>
            <person name="Sillekens P.T.G."/>
            <person name="Beijer R.P."/>
            <person name="Geurts van Kessel A.H.M."/>
            <person name="van Venrooij W.J."/>
        </authorList>
    </citation>
    <scope>NUCLEOTIDE SEQUENCE [GENOMIC DNA]</scope>
    <source>
        <tissue>Liver</tissue>
    </source>
</reference>
<reference key="2">
    <citation type="journal article" date="1987" name="EMBO J.">
        <title>cDNA cloning of the human U1 snRNA-associated A protein: extensive homology between U1 and U2 snRNP-specific proteins.</title>
        <authorList>
            <person name="Sillekens P.T.G."/>
            <person name="Habets W.J."/>
            <person name="Beijer R.P."/>
            <person name="van Venrooij W.J."/>
        </authorList>
    </citation>
    <scope>NUCLEOTIDE SEQUENCE [MRNA]</scope>
</reference>
<reference key="3">
    <citation type="journal article" date="2004" name="Genome Res.">
        <title>The status, quality, and expansion of the NIH full-length cDNA project: the Mammalian Gene Collection (MGC).</title>
        <authorList>
            <consortium name="The MGC Project Team"/>
        </authorList>
    </citation>
    <scope>NUCLEOTIDE SEQUENCE [LARGE SCALE MRNA]</scope>
    <source>
        <tissue>Lung</tissue>
        <tissue>Lymph</tissue>
    </source>
</reference>
<reference key="4">
    <citation type="submission" date="2004-01" db="UniProtKB">
        <authorList>
            <person name="Bienvenut W.V."/>
        </authorList>
    </citation>
    <scope>PROTEIN SEQUENCE OF 2-19</scope>
    <scope>ACETYLATION AT ALA-2</scope>
    <scope>IDENTIFICATION BY MASS SPECTROMETRY</scope>
    <source>
        <tissue>B-cell lymphoma</tissue>
    </source>
</reference>
<reference key="5">
    <citation type="journal article" date="1998" name="RNA">
        <title>The snRNP-free U1A (SF-A) complex(es): identification of the largest subunit as PSF, the polypyrimidine-tract binding protein-associated splicing factor.</title>
        <authorList>
            <person name="Lutz C.S."/>
            <person name="Cooke C."/>
            <person name="O'Connor J.P."/>
            <person name="Kobayashi R."/>
            <person name="Alwine J.C."/>
        </authorList>
    </citation>
    <scope>FUNCTION IN COUPLED SPLICING</scope>
    <scope>FUNCTION IN POLYADENYLATION PROCESS</scope>
    <scope>INTERACTION WITH SFPQ</scope>
    <scope>IDENTIFICATION IN A SNRNP-FREE COMPLEX WITH SFPQ</scope>
</reference>
<reference key="6">
    <citation type="journal article" date="2008" name="Proc. Natl. Acad. Sci. U.S.A.">
        <title>A quantitative atlas of mitotic phosphorylation.</title>
        <authorList>
            <person name="Dephoure N."/>
            <person name="Zhou C."/>
            <person name="Villen J."/>
            <person name="Beausoleil S.A."/>
            <person name="Bakalarski C.E."/>
            <person name="Elledge S.J."/>
            <person name="Gygi S.P."/>
        </authorList>
    </citation>
    <scope>PHOSPHORYLATION [LARGE SCALE ANALYSIS] AT THR-131</scope>
    <scope>IDENTIFICATION BY MASS SPECTROMETRY [LARGE SCALE ANALYSIS]</scope>
    <source>
        <tissue>Cervix carcinoma</tissue>
    </source>
</reference>
<reference key="7">
    <citation type="journal article" date="2009" name="Anal. Chem.">
        <title>Lys-N and trypsin cover complementary parts of the phosphoproteome in a refined SCX-based approach.</title>
        <authorList>
            <person name="Gauci S."/>
            <person name="Helbig A.O."/>
            <person name="Slijper M."/>
            <person name="Krijgsveld J."/>
            <person name="Heck A.J."/>
            <person name="Mohammed S."/>
        </authorList>
    </citation>
    <scope>ACETYLATION [LARGE SCALE ANALYSIS] AT ALA-2</scope>
    <scope>CLEAVAGE OF INITIATOR METHIONINE [LARGE SCALE ANALYSIS]</scope>
    <scope>IDENTIFICATION BY MASS SPECTROMETRY [LARGE SCALE ANALYSIS]</scope>
</reference>
<reference key="8">
    <citation type="journal article" date="2009" name="Nat. Biotechnol.">
        <title>Rapid and systematic analysis of the RNA recognition specificities of RNA-binding proteins.</title>
        <authorList>
            <person name="Ray D."/>
            <person name="Kazan H."/>
            <person name="Chan E.T."/>
            <person name="Pena Castillo L."/>
            <person name="Chaudhry S."/>
            <person name="Talukder S."/>
            <person name="Blencowe B.J."/>
            <person name="Morris Q."/>
            <person name="Hughes T.R."/>
        </authorList>
    </citation>
    <scope>RNA-BINDING</scope>
</reference>
<reference key="9">
    <citation type="journal article" date="2009" name="Science">
        <title>Lysine acetylation targets protein complexes and co-regulates major cellular functions.</title>
        <authorList>
            <person name="Choudhary C."/>
            <person name="Kumar C."/>
            <person name="Gnad F."/>
            <person name="Nielsen M.L."/>
            <person name="Rehman M."/>
            <person name="Walther T.C."/>
            <person name="Olsen J.V."/>
            <person name="Mann M."/>
        </authorList>
    </citation>
    <scope>ACETYLATION [LARGE SCALE ANALYSIS] AT LYS-60</scope>
    <scope>IDENTIFICATION BY MASS SPECTROMETRY [LARGE SCALE ANALYSIS]</scope>
</reference>
<reference key="10">
    <citation type="journal article" date="2010" name="Sci. Signal.">
        <title>Quantitative phosphoproteomics reveals widespread full phosphorylation site occupancy during mitosis.</title>
        <authorList>
            <person name="Olsen J.V."/>
            <person name="Vermeulen M."/>
            <person name="Santamaria A."/>
            <person name="Kumar C."/>
            <person name="Miller M.L."/>
            <person name="Jensen L.J."/>
            <person name="Gnad F."/>
            <person name="Cox J."/>
            <person name="Jensen T.S."/>
            <person name="Nigg E.A."/>
            <person name="Brunak S."/>
            <person name="Mann M."/>
        </authorList>
    </citation>
    <scope>PHOSPHORYLATION [LARGE SCALE ANALYSIS] AT THR-131</scope>
    <scope>IDENTIFICATION BY MASS SPECTROMETRY [LARGE SCALE ANALYSIS]</scope>
    <source>
        <tissue>Cervix carcinoma</tissue>
    </source>
</reference>
<reference key="11">
    <citation type="journal article" date="2011" name="BMC Syst. Biol.">
        <title>Initial characterization of the human central proteome.</title>
        <authorList>
            <person name="Burkard T.R."/>
            <person name="Planyavsky M."/>
            <person name="Kaupe I."/>
            <person name="Breitwieser F.P."/>
            <person name="Buerckstuemmer T."/>
            <person name="Bennett K.L."/>
            <person name="Superti-Furga G."/>
            <person name="Colinge J."/>
        </authorList>
    </citation>
    <scope>IDENTIFICATION BY MASS SPECTROMETRY [LARGE SCALE ANALYSIS]</scope>
</reference>
<reference key="12">
    <citation type="journal article" date="2013" name="J. Proteome Res.">
        <title>Toward a comprehensive characterization of a human cancer cell phosphoproteome.</title>
        <authorList>
            <person name="Zhou H."/>
            <person name="Di Palma S."/>
            <person name="Preisinger C."/>
            <person name="Peng M."/>
            <person name="Polat A.N."/>
            <person name="Heck A.J."/>
            <person name="Mohammed S."/>
        </authorList>
    </citation>
    <scope>PHOSPHORYLATION [LARGE SCALE ANALYSIS] AT THR-131</scope>
    <scope>IDENTIFICATION BY MASS SPECTROMETRY [LARGE SCALE ANALYSIS]</scope>
    <source>
        <tissue>Erythroleukemia</tissue>
    </source>
</reference>
<reference key="13">
    <citation type="journal article" date="2014" name="J. Proteomics">
        <title>An enzyme assisted RP-RPLC approach for in-depth analysis of human liver phosphoproteome.</title>
        <authorList>
            <person name="Bian Y."/>
            <person name="Song C."/>
            <person name="Cheng K."/>
            <person name="Dong M."/>
            <person name="Wang F."/>
            <person name="Huang J."/>
            <person name="Sun D."/>
            <person name="Wang L."/>
            <person name="Ye M."/>
            <person name="Zou H."/>
        </authorList>
    </citation>
    <scope>IDENTIFICATION BY MASS SPECTROMETRY [LARGE SCALE ANALYSIS]</scope>
    <source>
        <tissue>Liver</tissue>
    </source>
</reference>
<reference key="14">
    <citation type="journal article" date="2014" name="Mol. Cell. Proteomics">
        <title>Immunoaffinity enrichment and mass spectrometry analysis of protein methylation.</title>
        <authorList>
            <person name="Guo A."/>
            <person name="Gu H."/>
            <person name="Zhou J."/>
            <person name="Mulhern D."/>
            <person name="Wang Y."/>
            <person name="Lee K.A."/>
            <person name="Yang V."/>
            <person name="Aguiar M."/>
            <person name="Kornhauser J."/>
            <person name="Jia X."/>
            <person name="Ren J."/>
            <person name="Beausoleil S.A."/>
            <person name="Silva J.C."/>
            <person name="Vemulapalli V."/>
            <person name="Bedford M.T."/>
            <person name="Comb M.J."/>
        </authorList>
    </citation>
    <scope>METHYLATION [LARGE SCALE ANALYSIS] AT ARG-152</scope>
    <scope>IDENTIFICATION BY MASS SPECTROMETRY [LARGE SCALE ANALYSIS]</scope>
    <source>
        <tissue>Colon carcinoma</tissue>
    </source>
</reference>
<reference key="15">
    <citation type="journal article" date="2018" name="Proc. Natl. Acad. Sci. U.S.A.">
        <title>Structural-functional interactions of NS1-BP protein with the splicing and mRNA export machineries for viral and host gene expression.</title>
        <authorList>
            <person name="Zhang K."/>
            <person name="Shang G."/>
            <person name="Padavannil A."/>
            <person name="Wang J."/>
            <person name="Sakthivel R."/>
            <person name="Chen X."/>
            <person name="Kim M."/>
            <person name="Thompson M.G."/>
            <person name="Garcia-Sastre A."/>
            <person name="Lynch K.W."/>
            <person name="Chen Z.J."/>
            <person name="Chook Y.M."/>
            <person name="Fontoura B.M.A."/>
        </authorList>
    </citation>
    <scope>INTERACTION WITH IVNS1ABP</scope>
</reference>
<reference key="16">
    <citation type="journal article" date="1990" name="Nature">
        <title>Crystal structure of the RNA-binding domain of the U1 small nuclear ribonucleoprotein A.</title>
        <authorList>
            <person name="Nagai K."/>
            <person name="Oubridge C."/>
            <person name="Jessen T.-H."/>
            <person name="Li J."/>
            <person name="Evans P.R."/>
        </authorList>
    </citation>
    <scope>X-RAY CRYSTALLOGRAPHY (2.8 ANGSTROMS) OF 1-95</scope>
</reference>
<reference key="17">
    <citation type="journal article" date="1994" name="Nature">
        <title>Crystal structure at 1.92-A resolution of the RNA-binding domain of the U1A spliceosomal protein complexed with an RNA hairpin.</title>
        <authorList>
            <person name="Oubridge C."/>
            <person name="Ito N."/>
            <person name="Evans P.R."/>
            <person name="Teo C.-H."/>
            <person name="Nagai K."/>
        </authorList>
    </citation>
    <scope>X-RAY CRYSTALLOGRAPHY (1.92 ANGSTROMS)</scope>
</reference>
<reference key="18">
    <citation type="journal article" date="1991" name="Proc. Natl. Acad. Sci. U.S.A.">
        <title>RNA-binding domain of the A protein component of the U1 small nuclear ribonucleoprotein analyzed by NMR spectroscopy is structurally similar to ribosomal proteins.</title>
        <authorList>
            <person name="Hoffman D.W."/>
            <person name="Query C.C."/>
            <person name="Golden B.L."/>
            <person name="White S.W."/>
            <person name="Keene J.D."/>
        </authorList>
    </citation>
    <scope>STRUCTURE BY NMR OF 11-94</scope>
</reference>
<reference key="19">
    <citation type="journal article" date="1994" name="EMBO J.">
        <title>NMR studies of U1 snRNA recognition by the N-terminal RNP domain of the human U1A protein.</title>
        <authorList>
            <person name="Howe P.W.A."/>
            <person name="Nagai K."/>
            <person name="Neuhaus D."/>
            <person name="Varani G."/>
        </authorList>
    </citation>
    <scope>STRUCTURE BY NMR OF 1-102</scope>
</reference>
<reference key="20">
    <citation type="journal article" date="1996" name="Nature">
        <title>Specificity of ribonucleoprotein interaction determined by RNA folding during complex formulation.</title>
        <authorList>
            <person name="Allain F.H.-T."/>
            <person name="Gubser C.C."/>
            <person name="Howe P.W.A."/>
            <person name="Nagai K."/>
            <person name="Neuhaus D."/>
            <person name="Varani G."/>
        </authorList>
    </citation>
    <scope>STRUCTURE BY NMR OF 1-102</scope>
</reference>
<reference key="21">
    <citation type="journal article" date="1996" name="J. Mol. Biol.">
        <title>Solution structure of the N-terminal RNP domain of U1A protein: the role of C-terminal residues in structure stability and RNA binding.</title>
        <authorList>
            <person name="Avis J.M."/>
            <person name="Allain F.H.-T."/>
            <person name="Howe P.W.A."/>
            <person name="Varani G."/>
            <person name="Nagai K."/>
            <person name="Neuhaus D."/>
        </authorList>
    </citation>
    <scope>STRUCTURE BY NMR OF 1-117</scope>
</reference>
<reference key="22">
    <citation type="journal article" date="1997" name="EMBO J.">
        <title>Structural basis of the RNA-binding specificity of human U1A protein.</title>
        <authorList>
            <person name="Allain F.H.-T."/>
            <person name="Howe P.W."/>
            <person name="Neuhaus D."/>
            <person name="Varani G."/>
        </authorList>
    </citation>
    <scope>STRUCTURE BY NMR OF 1-102</scope>
</reference>
<reference key="23">
    <citation type="journal article" date="1997" name="Biochemistry">
        <title>Tertiary structure of RBD2 and backbone dynamics of RBD1 and RBD2 of the human U1A protein determined by NMR spectroscopy.</title>
        <authorList>
            <person name="Lu J."/>
            <person name="Hall K.B."/>
        </authorList>
    </citation>
    <scope>STRUCTURE BY NMR OF 195-282</scope>
</reference>
<reference key="24">
    <citation type="journal article" date="1991" name="EMBO J.">
        <title>Identification of molecular contacts between the U1 A small nuclear ribonucleoprotein and U1 RNA.</title>
        <authorList>
            <person name="Jessen T.-H."/>
            <person name="Oubridge C."/>
            <person name="Teo C.H."/>
            <person name="Pritchard C."/>
            <person name="Nagai K."/>
        </authorList>
    </citation>
    <scope>MUTAGENESIS</scope>
    <scope>DETAILED STUDIES OF RNA-BINDING</scope>
</reference>
<proteinExistence type="evidence at protein level"/>
<sequence length="282" mass="31280">MAVPETRPNHTIYINNLNEKIKKDELKKSLYAIFSQFGQILDILVSRSLKMRGQAFVIFKEVSSATNALRSMQGFPFYDKPMRIQYAKTDSDIIAKMKGTFVERDRKREKRKPKSQETPATKKAVQGGGATPVVGAVQGPVPGMPPMTQAPRIMHHMPGQPPYMPPPGMIPPPGLAPGQIPPGAMPPQQLMPGQMPPAQPLSENPPNHILFLTNLPEETNELMLSMLFNQFPGFKEVRLVPGRHDIAFVEFDNEVQAGAARDALQGFKITQNNAMKISFAKK</sequence>
<dbReference type="EMBL" id="M60784">
    <property type="protein sequence ID" value="AAA61245.1"/>
    <property type="molecule type" value="Genomic_DNA"/>
</dbReference>
<dbReference type="EMBL" id="M60779">
    <property type="protein sequence ID" value="AAA61245.1"/>
    <property type="status" value="JOINED"/>
    <property type="molecule type" value="Genomic_DNA"/>
</dbReference>
<dbReference type="EMBL" id="M60780">
    <property type="protein sequence ID" value="AAA61245.1"/>
    <property type="status" value="JOINED"/>
    <property type="molecule type" value="Genomic_DNA"/>
</dbReference>
<dbReference type="EMBL" id="M60781">
    <property type="protein sequence ID" value="AAA61245.1"/>
    <property type="status" value="JOINED"/>
    <property type="molecule type" value="Genomic_DNA"/>
</dbReference>
<dbReference type="EMBL" id="M60782">
    <property type="protein sequence ID" value="AAA61245.1"/>
    <property type="status" value="JOINED"/>
    <property type="molecule type" value="Genomic_DNA"/>
</dbReference>
<dbReference type="EMBL" id="M60783">
    <property type="protein sequence ID" value="AAA61245.1"/>
    <property type="status" value="JOINED"/>
    <property type="molecule type" value="Genomic_DNA"/>
</dbReference>
<dbReference type="EMBL" id="X06347">
    <property type="protein sequence ID" value="CAA29653.1"/>
    <property type="molecule type" value="mRNA"/>
</dbReference>
<dbReference type="EMBL" id="BC000405">
    <property type="protein sequence ID" value="AAH00405.1"/>
    <property type="molecule type" value="mRNA"/>
</dbReference>
<dbReference type="EMBL" id="BC008290">
    <property type="protein sequence ID" value="AAH08290.1"/>
    <property type="molecule type" value="mRNA"/>
</dbReference>
<dbReference type="CCDS" id="CCDS12565.1"/>
<dbReference type="PIR" id="JQ1528">
    <property type="entry name" value="JQ1528"/>
</dbReference>
<dbReference type="RefSeq" id="NP_004587.1">
    <property type="nucleotide sequence ID" value="NM_004596.5"/>
</dbReference>
<dbReference type="PDB" id="1AUD">
    <property type="method" value="NMR"/>
    <property type="chains" value="A=2-102"/>
</dbReference>
<dbReference type="PDB" id="1DRZ">
    <property type="method" value="X-ray"/>
    <property type="resolution" value="2.30 A"/>
    <property type="chains" value="A=2-98"/>
</dbReference>
<dbReference type="PDB" id="1DZ5">
    <property type="method" value="NMR"/>
    <property type="chains" value="A/B=2-102"/>
</dbReference>
<dbReference type="PDB" id="1FHT">
    <property type="method" value="NMR"/>
    <property type="chains" value="A=2-117"/>
</dbReference>
<dbReference type="PDB" id="1M5K">
    <property type="method" value="X-ray"/>
    <property type="resolution" value="2.40 A"/>
    <property type="chains" value="C/F=1-100"/>
</dbReference>
<dbReference type="PDB" id="1M5O">
    <property type="method" value="X-ray"/>
    <property type="resolution" value="2.20 A"/>
    <property type="chains" value="C/F=1-100"/>
</dbReference>
<dbReference type="PDB" id="1M5P">
    <property type="method" value="X-ray"/>
    <property type="resolution" value="2.60 A"/>
    <property type="chains" value="C/F=1-100"/>
</dbReference>
<dbReference type="PDB" id="1M5V">
    <property type="method" value="X-ray"/>
    <property type="resolution" value="2.40 A"/>
    <property type="chains" value="C/F=1-100"/>
</dbReference>
<dbReference type="PDB" id="1NU4">
    <property type="method" value="X-ray"/>
    <property type="resolution" value="1.80 A"/>
    <property type="chains" value="A/B=2-98"/>
</dbReference>
<dbReference type="PDB" id="1OIA">
    <property type="method" value="X-ray"/>
    <property type="resolution" value="2.40 A"/>
    <property type="chains" value="A/B=1-95"/>
</dbReference>
<dbReference type="PDB" id="1SJ3">
    <property type="method" value="X-ray"/>
    <property type="resolution" value="2.20 A"/>
    <property type="chains" value="P=1-100"/>
</dbReference>
<dbReference type="PDB" id="1SJ4">
    <property type="method" value="X-ray"/>
    <property type="resolution" value="2.70 A"/>
    <property type="chains" value="P=1-100"/>
</dbReference>
<dbReference type="PDB" id="1SJF">
    <property type="method" value="X-ray"/>
    <property type="resolution" value="2.75 A"/>
    <property type="chains" value="A=1-100"/>
</dbReference>
<dbReference type="PDB" id="1U6B">
    <property type="method" value="X-ray"/>
    <property type="resolution" value="3.10 A"/>
    <property type="chains" value="A=1-98"/>
</dbReference>
<dbReference type="PDB" id="1URN">
    <property type="method" value="X-ray"/>
    <property type="resolution" value="1.92 A"/>
    <property type="chains" value="A/B/C=2-98"/>
</dbReference>
<dbReference type="PDB" id="1VBX">
    <property type="method" value="X-ray"/>
    <property type="resolution" value="2.70 A"/>
    <property type="chains" value="A=1-100"/>
</dbReference>
<dbReference type="PDB" id="1VBY">
    <property type="method" value="X-ray"/>
    <property type="resolution" value="2.90 A"/>
    <property type="chains" value="A=1-100"/>
</dbReference>
<dbReference type="PDB" id="1VBZ">
    <property type="method" value="X-ray"/>
    <property type="resolution" value="2.80 A"/>
    <property type="chains" value="A=1-100"/>
</dbReference>
<dbReference type="PDB" id="1VC0">
    <property type="method" value="X-ray"/>
    <property type="resolution" value="2.50 A"/>
    <property type="chains" value="A=1-100"/>
</dbReference>
<dbReference type="PDB" id="1VC5">
    <property type="method" value="X-ray"/>
    <property type="resolution" value="3.40 A"/>
    <property type="chains" value="A=1-100"/>
</dbReference>
<dbReference type="PDB" id="1VC6">
    <property type="method" value="X-ray"/>
    <property type="resolution" value="2.80 A"/>
    <property type="chains" value="A=1-100"/>
</dbReference>
<dbReference type="PDB" id="1ZZN">
    <property type="method" value="X-ray"/>
    <property type="resolution" value="3.37 A"/>
    <property type="chains" value="A=1-98"/>
</dbReference>
<dbReference type="PDB" id="2A3J">
    <property type="method" value="NMR"/>
    <property type="chains" value="A=3-80"/>
</dbReference>
<dbReference type="PDB" id="2NZ4">
    <property type="method" value="X-ray"/>
    <property type="resolution" value="2.50 A"/>
    <property type="chains" value="A/B/C/D=5-98"/>
</dbReference>
<dbReference type="PDB" id="2OIH">
    <property type="method" value="X-ray"/>
    <property type="resolution" value="2.40 A"/>
    <property type="chains" value="A=2-100"/>
</dbReference>
<dbReference type="PDB" id="2OJ3">
    <property type="method" value="X-ray"/>
    <property type="resolution" value="2.90 A"/>
    <property type="chains" value="A=2-100"/>
</dbReference>
<dbReference type="PDB" id="2U1A">
    <property type="method" value="NMR"/>
    <property type="chains" value="A=195-282"/>
</dbReference>
<dbReference type="PDB" id="3BO2">
    <property type="method" value="X-ray"/>
    <property type="resolution" value="3.31 A"/>
    <property type="chains" value="A=4-98"/>
</dbReference>
<dbReference type="PDB" id="3BO3">
    <property type="method" value="X-ray"/>
    <property type="resolution" value="3.40 A"/>
    <property type="chains" value="A=4-98"/>
</dbReference>
<dbReference type="PDB" id="3BO4">
    <property type="method" value="X-ray"/>
    <property type="resolution" value="3.33 A"/>
    <property type="chains" value="A=4-98"/>
</dbReference>
<dbReference type="PDB" id="3CUL">
    <property type="method" value="X-ray"/>
    <property type="resolution" value="2.80 A"/>
    <property type="chains" value="A/B=1-96"/>
</dbReference>
<dbReference type="PDB" id="3CUN">
    <property type="method" value="X-ray"/>
    <property type="resolution" value="3.00 A"/>
    <property type="chains" value="A/B=1-98"/>
</dbReference>
<dbReference type="PDB" id="3EGZ">
    <property type="method" value="X-ray"/>
    <property type="resolution" value="2.20 A"/>
    <property type="chains" value="A=1-98"/>
</dbReference>
<dbReference type="PDB" id="3G8S">
    <property type="method" value="X-ray"/>
    <property type="resolution" value="3.10 A"/>
    <property type="chains" value="A/B/C/D=1-98"/>
</dbReference>
<dbReference type="PDB" id="3G8T">
    <property type="method" value="X-ray"/>
    <property type="resolution" value="3.00 A"/>
    <property type="chains" value="A/B/C/D=1-98"/>
</dbReference>
<dbReference type="PDB" id="3G96">
    <property type="method" value="X-ray"/>
    <property type="resolution" value="3.01 A"/>
    <property type="chains" value="A/B/C/D=1-98"/>
</dbReference>
<dbReference type="PDB" id="3G9C">
    <property type="method" value="X-ray"/>
    <property type="resolution" value="2.90 A"/>
    <property type="chains" value="A/B/C/D=1-98"/>
</dbReference>
<dbReference type="PDB" id="3HHN">
    <property type="method" value="X-ray"/>
    <property type="resolution" value="2.99 A"/>
    <property type="chains" value="B/D=2-98"/>
</dbReference>
<dbReference type="PDB" id="3IIN">
    <property type="method" value="X-ray"/>
    <property type="resolution" value="4.18 A"/>
    <property type="chains" value="A=4-98"/>
</dbReference>
<dbReference type="PDB" id="3IRW">
    <property type="method" value="X-ray"/>
    <property type="resolution" value="2.70 A"/>
    <property type="chains" value="P=1-98"/>
</dbReference>
<dbReference type="PDB" id="3IWN">
    <property type="method" value="X-ray"/>
    <property type="resolution" value="3.20 A"/>
    <property type="chains" value="C/D=6-96"/>
</dbReference>
<dbReference type="PDB" id="3K0J">
    <property type="method" value="X-ray"/>
    <property type="resolution" value="3.10 A"/>
    <property type="chains" value="A/B/C/D=2-97"/>
</dbReference>
<dbReference type="PDB" id="3L3C">
    <property type="method" value="X-ray"/>
    <property type="resolution" value="2.85 A"/>
    <property type="chains" value="A/B/C/D=7-96"/>
</dbReference>
<dbReference type="PDB" id="3MUM">
    <property type="method" value="X-ray"/>
    <property type="resolution" value="2.90 A"/>
    <property type="chains" value="P=1-98"/>
</dbReference>
<dbReference type="PDB" id="3MUR">
    <property type="method" value="X-ray"/>
    <property type="resolution" value="3.00 A"/>
    <property type="chains" value="P=1-98"/>
</dbReference>
<dbReference type="PDB" id="3MUT">
    <property type="method" value="X-ray"/>
    <property type="resolution" value="3.00 A"/>
    <property type="chains" value="P=1-98"/>
</dbReference>
<dbReference type="PDB" id="3MUV">
    <property type="method" value="X-ray"/>
    <property type="resolution" value="3.20 A"/>
    <property type="chains" value="P=1-98"/>
</dbReference>
<dbReference type="PDB" id="3MXH">
    <property type="method" value="X-ray"/>
    <property type="resolution" value="2.30 A"/>
    <property type="chains" value="P=1-98"/>
</dbReference>
<dbReference type="PDB" id="3P49">
    <property type="method" value="X-ray"/>
    <property type="resolution" value="3.55 A"/>
    <property type="chains" value="B=1-98"/>
</dbReference>
<dbReference type="PDB" id="3PGW">
    <property type="method" value="X-ray"/>
    <property type="resolution" value="4.40 A"/>
    <property type="chains" value="A/P=1-282"/>
</dbReference>
<dbReference type="PDB" id="3R1H">
    <property type="method" value="X-ray"/>
    <property type="resolution" value="3.15 A"/>
    <property type="chains" value="A/D=1-98"/>
</dbReference>
<dbReference type="PDB" id="3R1L">
    <property type="method" value="X-ray"/>
    <property type="resolution" value="3.12 A"/>
    <property type="chains" value="A/D=1-98"/>
</dbReference>
<dbReference type="PDB" id="3UCU">
    <property type="method" value="X-ray"/>
    <property type="resolution" value="2.80 A"/>
    <property type="chains" value="P=1-98"/>
</dbReference>
<dbReference type="PDB" id="3UCZ">
    <property type="method" value="X-ray"/>
    <property type="resolution" value="2.80 A"/>
    <property type="chains" value="P=1-98"/>
</dbReference>
<dbReference type="PDB" id="3UD3">
    <property type="method" value="X-ray"/>
    <property type="resolution" value="3.10 A"/>
    <property type="chains" value="P=1-98"/>
</dbReference>
<dbReference type="PDB" id="3UD4">
    <property type="method" value="X-ray"/>
    <property type="resolution" value="2.70 A"/>
    <property type="chains" value="P=1-98"/>
</dbReference>
<dbReference type="PDB" id="4C4W">
    <property type="method" value="X-ray"/>
    <property type="resolution" value="2.95 A"/>
    <property type="chains" value="A/B/E/F=1-102"/>
</dbReference>
<dbReference type="PDB" id="4PR6">
    <property type="method" value="X-ray"/>
    <property type="resolution" value="2.30 A"/>
    <property type="chains" value="A=4-96"/>
</dbReference>
<dbReference type="PDB" id="4PRF">
    <property type="method" value="X-ray"/>
    <property type="resolution" value="2.40 A"/>
    <property type="chains" value="A=1-100"/>
</dbReference>
<dbReference type="PDB" id="4W90">
    <property type="method" value="X-ray"/>
    <property type="resolution" value="3.12 A"/>
    <property type="chains" value="B=6-96"/>
</dbReference>
<dbReference type="PDB" id="4W92">
    <property type="method" value="X-ray"/>
    <property type="resolution" value="3.21 A"/>
    <property type="chains" value="B=6-96"/>
</dbReference>
<dbReference type="PDB" id="4YB1">
    <property type="method" value="X-ray"/>
    <property type="resolution" value="2.08 A"/>
    <property type="chains" value="P=7-97"/>
</dbReference>
<dbReference type="PDB" id="5DDO">
    <property type="method" value="X-ray"/>
    <property type="resolution" value="3.10 A"/>
    <property type="chains" value="C/G=2-98"/>
</dbReference>
<dbReference type="PDB" id="5DDP">
    <property type="method" value="X-ray"/>
    <property type="resolution" value="2.30 A"/>
    <property type="chains" value="C/D=2-98"/>
</dbReference>
<dbReference type="PDB" id="5DDQ">
    <property type="method" value="X-ray"/>
    <property type="resolution" value="2.40 A"/>
    <property type="chains" value="C/D=2-98"/>
</dbReference>
<dbReference type="PDB" id="5DDR">
    <property type="method" value="X-ray"/>
    <property type="resolution" value="2.60 A"/>
    <property type="chains" value="C/D=2-98"/>
</dbReference>
<dbReference type="PDB" id="5FJ4">
    <property type="method" value="X-ray"/>
    <property type="resolution" value="2.95 A"/>
    <property type="chains" value="A/B/E/F=1-102"/>
</dbReference>
<dbReference type="PDB" id="6LAS">
    <property type="method" value="X-ray"/>
    <property type="resolution" value="2.71 A"/>
    <property type="chains" value="C/D/E=6-96"/>
</dbReference>
<dbReference type="PDB" id="6LAU">
    <property type="method" value="X-ray"/>
    <property type="resolution" value="3.11 A"/>
    <property type="chains" value="C/D/E=6-96"/>
</dbReference>
<dbReference type="PDB" id="6LAX">
    <property type="method" value="X-ray"/>
    <property type="resolution" value="2.70 A"/>
    <property type="chains" value="C/D/E=6-96"/>
</dbReference>
<dbReference type="PDB" id="6LAZ">
    <property type="method" value="X-ray"/>
    <property type="resolution" value="2.76 A"/>
    <property type="chains" value="C/D/E=6-96"/>
</dbReference>
<dbReference type="PDB" id="6QX9">
    <property type="method" value="EM"/>
    <property type="resolution" value="3.28 A"/>
    <property type="chains" value="1A=1-282"/>
</dbReference>
<dbReference type="PDB" id="6SQN">
    <property type="method" value="X-ray"/>
    <property type="resolution" value="2.05 A"/>
    <property type="chains" value="A/B/C=2-98"/>
</dbReference>
<dbReference type="PDB" id="6SQQ">
    <property type="method" value="X-ray"/>
    <property type="resolution" value="2.37 A"/>
    <property type="chains" value="AAA/BBB/CCC=1-98"/>
</dbReference>
<dbReference type="PDB" id="6SQT">
    <property type="method" value="X-ray"/>
    <property type="resolution" value="1.84 A"/>
    <property type="chains" value="AAA/BBB/CCC=1-98"/>
</dbReference>
<dbReference type="PDB" id="6SQV">
    <property type="method" value="X-ray"/>
    <property type="resolution" value="2.45 A"/>
    <property type="chains" value="AAA/BBB/CCC/DDD=1-97"/>
</dbReference>
<dbReference type="PDB" id="6SR7">
    <property type="method" value="X-ray"/>
    <property type="resolution" value="1.86 A"/>
    <property type="chains" value="AAA/BBB/CCC/DDD=1-98"/>
</dbReference>
<dbReference type="PDB" id="6XH0">
    <property type="method" value="X-ray"/>
    <property type="resolution" value="3.10 A"/>
    <property type="chains" value="A=6-90"/>
</dbReference>
<dbReference type="PDB" id="6XH1">
    <property type="method" value="X-ray"/>
    <property type="resolution" value="2.60 A"/>
    <property type="chains" value="A=6-90"/>
</dbReference>
<dbReference type="PDB" id="6XH2">
    <property type="method" value="X-ray"/>
    <property type="resolution" value="1.71 A"/>
    <property type="chains" value="A=2-93"/>
</dbReference>
<dbReference type="PDB" id="6XH3">
    <property type="method" value="X-ray"/>
    <property type="resolution" value="2.35 A"/>
    <property type="chains" value="A=6-93"/>
</dbReference>
<dbReference type="PDB" id="7AEP">
    <property type="method" value="NMR"/>
    <property type="chains" value="A=157-282"/>
</dbReference>
<dbReference type="PDB" id="7B0Y">
    <property type="method" value="EM"/>
    <property type="resolution" value="3.60 A"/>
    <property type="chains" value="c=1-282"/>
</dbReference>
<dbReference type="PDB" id="7D7V">
    <property type="method" value="X-ray"/>
    <property type="resolution" value="2.80 A"/>
    <property type="chains" value="C=5-96"/>
</dbReference>
<dbReference type="PDB" id="7DLZ">
    <property type="method" value="X-ray"/>
    <property type="resolution" value="3.00 A"/>
    <property type="chains" value="A/B/C/D=1-102"/>
</dbReference>
<dbReference type="PDB" id="7DWH">
    <property type="method" value="X-ray"/>
    <property type="resolution" value="3.10 A"/>
    <property type="chains" value="A/B/C/D=1-102"/>
</dbReference>
<dbReference type="PDB" id="7LHX">
    <property type="method" value="X-ray"/>
    <property type="resolution" value="2.20 A"/>
    <property type="chains" value="A=1-98"/>
</dbReference>
<dbReference type="PDB" id="7QR3">
    <property type="method" value="X-ray"/>
    <property type="resolution" value="2.18 A"/>
    <property type="chains" value="A/B=7-97"/>
</dbReference>
<dbReference type="PDB" id="7QR4">
    <property type="method" value="X-ray"/>
    <property type="resolution" value="2.83 A"/>
    <property type="chains" value="A=7-97"/>
</dbReference>
<dbReference type="PDB" id="7VPX">
    <property type="method" value="EM"/>
    <property type="resolution" value="3.00 A"/>
    <property type="chains" value="M=1-282"/>
</dbReference>
<dbReference type="PDB" id="8GXB">
    <property type="method" value="X-ray"/>
    <property type="resolution" value="2.15 A"/>
    <property type="chains" value="C/D/E/F/G=2-98"/>
</dbReference>
<dbReference type="PDB" id="8GXC">
    <property type="method" value="X-ray"/>
    <property type="resolution" value="2.50 A"/>
    <property type="chains" value="C/D/E/F/G=2-98"/>
</dbReference>
<dbReference type="PDB" id="8JY0">
    <property type="method" value="X-ray"/>
    <property type="resolution" value="2.75 A"/>
    <property type="chains" value="A/C/E=1-102"/>
</dbReference>
<dbReference type="PDBsum" id="1AUD"/>
<dbReference type="PDBsum" id="1DRZ"/>
<dbReference type="PDBsum" id="1DZ5"/>
<dbReference type="PDBsum" id="1FHT"/>
<dbReference type="PDBsum" id="1M5K"/>
<dbReference type="PDBsum" id="1M5O"/>
<dbReference type="PDBsum" id="1M5P"/>
<dbReference type="PDBsum" id="1M5V"/>
<dbReference type="PDBsum" id="1NU4"/>
<dbReference type="PDBsum" id="1OIA"/>
<dbReference type="PDBsum" id="1SJ3"/>
<dbReference type="PDBsum" id="1SJ4"/>
<dbReference type="PDBsum" id="1SJF"/>
<dbReference type="PDBsum" id="1U6B"/>
<dbReference type="PDBsum" id="1URN"/>
<dbReference type="PDBsum" id="1VBX"/>
<dbReference type="PDBsum" id="1VBY"/>
<dbReference type="PDBsum" id="1VBZ"/>
<dbReference type="PDBsum" id="1VC0"/>
<dbReference type="PDBsum" id="1VC5"/>
<dbReference type="PDBsum" id="1VC6"/>
<dbReference type="PDBsum" id="1ZZN"/>
<dbReference type="PDBsum" id="2A3J"/>
<dbReference type="PDBsum" id="2NZ4"/>
<dbReference type="PDBsum" id="2OIH"/>
<dbReference type="PDBsum" id="2OJ3"/>
<dbReference type="PDBsum" id="2U1A"/>
<dbReference type="PDBsum" id="3BO2"/>
<dbReference type="PDBsum" id="3BO3"/>
<dbReference type="PDBsum" id="3BO4"/>
<dbReference type="PDBsum" id="3CUL"/>
<dbReference type="PDBsum" id="3CUN"/>
<dbReference type="PDBsum" id="3EGZ"/>
<dbReference type="PDBsum" id="3G8S"/>
<dbReference type="PDBsum" id="3G8T"/>
<dbReference type="PDBsum" id="3G96"/>
<dbReference type="PDBsum" id="3G9C"/>
<dbReference type="PDBsum" id="3HHN"/>
<dbReference type="PDBsum" id="3IIN"/>
<dbReference type="PDBsum" id="3IRW"/>
<dbReference type="PDBsum" id="3IWN"/>
<dbReference type="PDBsum" id="3K0J"/>
<dbReference type="PDBsum" id="3L3C"/>
<dbReference type="PDBsum" id="3MUM"/>
<dbReference type="PDBsum" id="3MUR"/>
<dbReference type="PDBsum" id="3MUT"/>
<dbReference type="PDBsum" id="3MUV"/>
<dbReference type="PDBsum" id="3MXH"/>
<dbReference type="PDBsum" id="3P49"/>
<dbReference type="PDBsum" id="3PGW"/>
<dbReference type="PDBsum" id="3R1H"/>
<dbReference type="PDBsum" id="3R1L"/>
<dbReference type="PDBsum" id="3UCU"/>
<dbReference type="PDBsum" id="3UCZ"/>
<dbReference type="PDBsum" id="3UD3"/>
<dbReference type="PDBsum" id="3UD4"/>
<dbReference type="PDBsum" id="4C4W"/>
<dbReference type="PDBsum" id="4PR6"/>
<dbReference type="PDBsum" id="4PRF"/>
<dbReference type="PDBsum" id="4W90"/>
<dbReference type="PDBsum" id="4W92"/>
<dbReference type="PDBsum" id="4YB1"/>
<dbReference type="PDBsum" id="5DDO"/>
<dbReference type="PDBsum" id="5DDP"/>
<dbReference type="PDBsum" id="5DDQ"/>
<dbReference type="PDBsum" id="5DDR"/>
<dbReference type="PDBsum" id="5FJ4"/>
<dbReference type="PDBsum" id="6LAS"/>
<dbReference type="PDBsum" id="6LAU"/>
<dbReference type="PDBsum" id="6LAX"/>
<dbReference type="PDBsum" id="6LAZ"/>
<dbReference type="PDBsum" id="6QX9"/>
<dbReference type="PDBsum" id="6SQN"/>
<dbReference type="PDBsum" id="6SQQ"/>
<dbReference type="PDBsum" id="6SQT"/>
<dbReference type="PDBsum" id="6SQV"/>
<dbReference type="PDBsum" id="6SR7"/>
<dbReference type="PDBsum" id="6XH0"/>
<dbReference type="PDBsum" id="6XH1"/>
<dbReference type="PDBsum" id="6XH2"/>
<dbReference type="PDBsum" id="6XH3"/>
<dbReference type="PDBsum" id="7AEP"/>
<dbReference type="PDBsum" id="7B0Y"/>
<dbReference type="PDBsum" id="7D7V"/>
<dbReference type="PDBsum" id="7DLZ"/>
<dbReference type="PDBsum" id="7DWH"/>
<dbReference type="PDBsum" id="7LHX"/>
<dbReference type="PDBsum" id="7QR3"/>
<dbReference type="PDBsum" id="7QR4"/>
<dbReference type="PDBsum" id="7VPX"/>
<dbReference type="PDBsum" id="8GXB"/>
<dbReference type="PDBsum" id="8GXC"/>
<dbReference type="PDBsum" id="8JY0"/>
<dbReference type="EMDB" id="EMD-11972"/>
<dbReference type="EMDB" id="EMD-32074"/>
<dbReference type="EMDB" id="EMD-4665"/>
<dbReference type="SMR" id="P09012"/>
<dbReference type="BioGRID" id="112510">
    <property type="interactions" value="518"/>
</dbReference>
<dbReference type="ComplexPortal" id="CPX-2391">
    <property type="entry name" value="U4/U6.U5 small nuclear ribonucleoprotein complex"/>
</dbReference>
<dbReference type="ComplexPortal" id="CPX-2392">
    <property type="entry name" value="U1 small nuclear ribonucleoprotein complex"/>
</dbReference>
<dbReference type="CORUM" id="P09012"/>
<dbReference type="DIP" id="DIP-29407N"/>
<dbReference type="FunCoup" id="P09012">
    <property type="interactions" value="3247"/>
</dbReference>
<dbReference type="IntAct" id="P09012">
    <property type="interactions" value="358"/>
</dbReference>
<dbReference type="MINT" id="P09012"/>
<dbReference type="STRING" id="9606.ENSP00000243563"/>
<dbReference type="DrugBank" id="DB02175">
    <property type="generic name" value="Malonic acid"/>
</dbReference>
<dbReference type="GlyCosmos" id="P09012">
    <property type="glycosylation" value="1 site, 1 glycan"/>
</dbReference>
<dbReference type="GlyGen" id="P09012">
    <property type="glycosylation" value="2 sites, 1 O-linked glycan (2 sites)"/>
</dbReference>
<dbReference type="iPTMnet" id="P09012"/>
<dbReference type="MetOSite" id="P09012"/>
<dbReference type="PhosphoSitePlus" id="P09012"/>
<dbReference type="BioMuta" id="SNRPA"/>
<dbReference type="DMDM" id="134092"/>
<dbReference type="jPOST" id="P09012"/>
<dbReference type="MassIVE" id="P09012"/>
<dbReference type="PaxDb" id="9606-ENSP00000243563"/>
<dbReference type="PeptideAtlas" id="P09012"/>
<dbReference type="ProteomicsDB" id="52184"/>
<dbReference type="Pumba" id="P09012"/>
<dbReference type="TopDownProteomics" id="P09012"/>
<dbReference type="Antibodypedia" id="3308">
    <property type="antibodies" value="341 antibodies from 33 providers"/>
</dbReference>
<dbReference type="DNASU" id="6626"/>
<dbReference type="Ensembl" id="ENST00000243563.8">
    <property type="protein sequence ID" value="ENSP00000243563.2"/>
    <property type="gene ID" value="ENSG00000077312.9"/>
</dbReference>
<dbReference type="GeneID" id="6626"/>
<dbReference type="KEGG" id="hsa:6626"/>
<dbReference type="MANE-Select" id="ENST00000243563.8">
    <property type="protein sequence ID" value="ENSP00000243563.2"/>
    <property type="RefSeq nucleotide sequence ID" value="NM_004596.5"/>
    <property type="RefSeq protein sequence ID" value="NP_004587.1"/>
</dbReference>
<dbReference type="UCSC" id="uc002ooz.4">
    <property type="organism name" value="human"/>
</dbReference>
<dbReference type="AGR" id="HGNC:11151"/>
<dbReference type="CTD" id="6626"/>
<dbReference type="DisGeNET" id="6626"/>
<dbReference type="GeneCards" id="SNRPA"/>
<dbReference type="HGNC" id="HGNC:11151">
    <property type="gene designation" value="SNRPA"/>
</dbReference>
<dbReference type="HPA" id="ENSG00000077312">
    <property type="expression patterns" value="Low tissue specificity"/>
</dbReference>
<dbReference type="MIM" id="182285">
    <property type="type" value="gene"/>
</dbReference>
<dbReference type="neXtProt" id="NX_P09012"/>
<dbReference type="OpenTargets" id="ENSG00000077312"/>
<dbReference type="PharmGKB" id="PA35993"/>
<dbReference type="VEuPathDB" id="HostDB:ENSG00000077312"/>
<dbReference type="eggNOG" id="KOG4206">
    <property type="taxonomic scope" value="Eukaryota"/>
</dbReference>
<dbReference type="GeneTree" id="ENSGT00390000007046"/>
<dbReference type="HOGENOM" id="CLU_041869_1_3_1"/>
<dbReference type="InParanoid" id="P09012"/>
<dbReference type="OMA" id="VRMIPTK"/>
<dbReference type="OrthoDB" id="277802at2759"/>
<dbReference type="PAN-GO" id="P09012">
    <property type="GO annotations" value="3 GO annotations based on evolutionary models"/>
</dbReference>
<dbReference type="PhylomeDB" id="P09012"/>
<dbReference type="TreeFam" id="TF313834"/>
<dbReference type="PathwayCommons" id="P09012"/>
<dbReference type="Reactome" id="R-HSA-72163">
    <property type="pathway name" value="mRNA Splicing - Major Pathway"/>
</dbReference>
<dbReference type="SignaLink" id="P09012"/>
<dbReference type="SIGNOR" id="P09012"/>
<dbReference type="BioGRID-ORCS" id="6626">
    <property type="hits" value="242 hits in 1170 CRISPR screens"/>
</dbReference>
<dbReference type="CD-CODE" id="232F8A39">
    <property type="entry name" value="P-body"/>
</dbReference>
<dbReference type="CD-CODE" id="804901D1">
    <property type="entry name" value="Nuclear speckle"/>
</dbReference>
<dbReference type="CD-CODE" id="91857CE7">
    <property type="entry name" value="Nucleolus"/>
</dbReference>
<dbReference type="ChiTaRS" id="SNRPA">
    <property type="organism name" value="human"/>
</dbReference>
<dbReference type="EvolutionaryTrace" id="P09012"/>
<dbReference type="GeneWiki" id="Small_nuclear_ribonucleoprotein_polypeptide_A"/>
<dbReference type="GenomeRNAi" id="6626"/>
<dbReference type="Pharos" id="P09012">
    <property type="development level" value="Tbio"/>
</dbReference>
<dbReference type="PRO" id="PR:P09012"/>
<dbReference type="Proteomes" id="UP000005640">
    <property type="component" value="Chromosome 19"/>
</dbReference>
<dbReference type="RNAct" id="P09012">
    <property type="molecule type" value="protein"/>
</dbReference>
<dbReference type="Bgee" id="ENSG00000077312">
    <property type="expression patterns" value="Expressed in ganglionic eminence and 201 other cell types or tissues"/>
</dbReference>
<dbReference type="ExpressionAtlas" id="P09012">
    <property type="expression patterns" value="baseline and differential"/>
</dbReference>
<dbReference type="GO" id="GO:0005654">
    <property type="term" value="C:nucleoplasm"/>
    <property type="evidence" value="ECO:0000314"/>
    <property type="project" value="HPA"/>
</dbReference>
<dbReference type="GO" id="GO:0005634">
    <property type="term" value="C:nucleus"/>
    <property type="evidence" value="ECO:0000303"/>
    <property type="project" value="ComplexPortal"/>
</dbReference>
<dbReference type="GO" id="GO:0005681">
    <property type="term" value="C:spliceosomal complex"/>
    <property type="evidence" value="ECO:0000314"/>
    <property type="project" value="HGNC-UCL"/>
</dbReference>
<dbReference type="GO" id="GO:0005685">
    <property type="term" value="C:U1 snRNP"/>
    <property type="evidence" value="ECO:0000314"/>
    <property type="project" value="UniProtKB"/>
</dbReference>
<dbReference type="GO" id="GO:0046540">
    <property type="term" value="C:U4/U6 x U5 tri-snRNP complex"/>
    <property type="evidence" value="ECO:0000353"/>
    <property type="project" value="ComplexPortal"/>
</dbReference>
<dbReference type="GO" id="GO:0003677">
    <property type="term" value="F:DNA binding"/>
    <property type="evidence" value="ECO:0000269"/>
    <property type="project" value="DisProt"/>
</dbReference>
<dbReference type="GO" id="GO:0042802">
    <property type="term" value="F:identical protein binding"/>
    <property type="evidence" value="ECO:0000353"/>
    <property type="project" value="IntAct"/>
</dbReference>
<dbReference type="GO" id="GO:0003723">
    <property type="term" value="F:RNA binding"/>
    <property type="evidence" value="ECO:0000314"/>
    <property type="project" value="UniProtKB"/>
</dbReference>
<dbReference type="GO" id="GO:0030619">
    <property type="term" value="F:U1 snRNA binding"/>
    <property type="evidence" value="ECO:0000314"/>
    <property type="project" value="UniProtKB"/>
</dbReference>
<dbReference type="GO" id="GO:1990446">
    <property type="term" value="F:U1 snRNP binding"/>
    <property type="evidence" value="ECO:0007669"/>
    <property type="project" value="Ensembl"/>
</dbReference>
<dbReference type="GO" id="GO:0000398">
    <property type="term" value="P:mRNA splicing, via spliceosome"/>
    <property type="evidence" value="ECO:0000318"/>
    <property type="project" value="GO_Central"/>
</dbReference>
<dbReference type="CDD" id="cd12477">
    <property type="entry name" value="RRM1_U1A"/>
    <property type="match status" value="1"/>
</dbReference>
<dbReference type="CDD" id="cd12480">
    <property type="entry name" value="RRM2_U1A"/>
    <property type="match status" value="1"/>
</dbReference>
<dbReference type="DisProt" id="DP01857"/>
<dbReference type="FunFam" id="3.30.70.330:FF:000039">
    <property type="entry name" value="U1 small nuclear ribonucleoprotein A"/>
    <property type="match status" value="1"/>
</dbReference>
<dbReference type="FunFam" id="3.30.70.330:FF:000029">
    <property type="entry name" value="U2 small nuclear ribonucleoprotein B"/>
    <property type="match status" value="1"/>
</dbReference>
<dbReference type="Gene3D" id="3.30.70.330">
    <property type="match status" value="2"/>
</dbReference>
<dbReference type="IDEAL" id="IID00018"/>
<dbReference type="InterPro" id="IPR012677">
    <property type="entry name" value="Nucleotide-bd_a/b_plait_sf"/>
</dbReference>
<dbReference type="InterPro" id="IPR035979">
    <property type="entry name" value="RBD_domain_sf"/>
</dbReference>
<dbReference type="InterPro" id="IPR000504">
    <property type="entry name" value="RRM_dom"/>
</dbReference>
<dbReference type="InterPro" id="IPR034407">
    <property type="entry name" value="U1A_RRM1"/>
</dbReference>
<dbReference type="InterPro" id="IPR034409">
    <property type="entry name" value="U1A_RRM2"/>
</dbReference>
<dbReference type="PANTHER" id="PTHR10501">
    <property type="entry name" value="U1 SMALL NUCLEAR RIBONUCLEOPROTEIN A/U2 SMALL NUCLEAR RIBONUCLEOPROTEIN B"/>
    <property type="match status" value="1"/>
</dbReference>
<dbReference type="Pfam" id="PF00076">
    <property type="entry name" value="RRM_1"/>
    <property type="match status" value="2"/>
</dbReference>
<dbReference type="SMART" id="SM00360">
    <property type="entry name" value="RRM"/>
    <property type="match status" value="2"/>
</dbReference>
<dbReference type="SUPFAM" id="SSF54928">
    <property type="entry name" value="RNA-binding domain, RBD"/>
    <property type="match status" value="1"/>
</dbReference>
<dbReference type="PROSITE" id="PS50102">
    <property type="entry name" value="RRM"/>
    <property type="match status" value="2"/>
</dbReference>
<accession>P09012</accession>
<name>SNRPA_HUMAN</name>
<protein>
    <recommendedName>
        <fullName>U1 small nuclear ribonucleoprotein A</fullName>
        <shortName>U1 snRNP A</shortName>
        <shortName>U1-A</shortName>
        <shortName>U1A</shortName>
    </recommendedName>
</protein>
<feature type="initiator methionine" description="Removed" evidence="6 9">
    <location>
        <position position="1"/>
    </location>
</feature>
<feature type="chain" id="PRO_0000081887" description="U1 small nuclear ribonucleoprotein A">
    <location>
        <begin position="2"/>
        <end position="282"/>
    </location>
</feature>
<feature type="domain" description="RRM 1" evidence="1">
    <location>
        <begin position="10"/>
        <end position="89"/>
    </location>
</feature>
<feature type="domain" description="RRM 2" evidence="1">
    <location>
        <begin position="208"/>
        <end position="282"/>
    </location>
</feature>
<feature type="region of interest" description="Disordered" evidence="2">
    <location>
        <begin position="100"/>
        <end position="132"/>
    </location>
</feature>
<feature type="modified residue" description="N-acetylalanine" evidence="6 9">
    <location>
        <position position="2"/>
    </location>
</feature>
<feature type="modified residue" description="N6-acetyllysine" evidence="10">
    <location>
        <position position="60"/>
    </location>
</feature>
<feature type="modified residue" description="Phosphothreonine" evidence="8 11 12">
    <location>
        <position position="131"/>
    </location>
</feature>
<feature type="modified residue" description="Omega-N-methylarginine" evidence="13">
    <location>
        <position position="152"/>
    </location>
</feature>
<feature type="mutagenesis site" description="Abolishes RNA binding." evidence="3">
    <original>T</original>
    <variation>V</variation>
    <location>
        <position position="11"/>
    </location>
</feature>
<feature type="mutagenesis site" description="Substantially reduces RNA binding." evidence="3">
    <original>Y</original>
    <variation>F</variation>
    <location>
        <position position="13"/>
    </location>
</feature>
<feature type="mutagenesis site" description="Abolishes RNA binding." evidence="3">
    <original>N</original>
    <variation>V</variation>
    <location>
        <position position="15"/>
    </location>
</feature>
<feature type="mutagenesis site" description="Substantially reduces RNA binding." evidence="3">
    <original>N</original>
    <variation>V</variation>
    <location>
        <position position="16"/>
    </location>
</feature>
<feature type="mutagenesis site" description="Abolishes RNA binding." evidence="3">
    <original>R</original>
    <variation>Q</variation>
    <location>
        <position position="52"/>
    </location>
</feature>
<feature type="helix" evidence="21">
    <location>
        <begin position="4"/>
        <end position="6"/>
    </location>
</feature>
<feature type="strand" evidence="17">
    <location>
        <begin position="10"/>
        <end position="16"/>
    </location>
</feature>
<feature type="strand" evidence="16">
    <location>
        <begin position="19"/>
        <end position="21"/>
    </location>
</feature>
<feature type="helix" evidence="17">
    <location>
        <begin position="23"/>
        <end position="34"/>
    </location>
</feature>
<feature type="helix" evidence="17">
    <location>
        <begin position="35"/>
        <end position="37"/>
    </location>
</feature>
<feature type="strand" evidence="17">
    <location>
        <begin position="40"/>
        <end position="44"/>
    </location>
</feature>
<feature type="helix" evidence="14">
    <location>
        <begin position="47"/>
        <end position="51"/>
    </location>
</feature>
<feature type="strand" evidence="17">
    <location>
        <begin position="55"/>
        <end position="61"/>
    </location>
</feature>
<feature type="helix" evidence="17">
    <location>
        <begin position="62"/>
        <end position="72"/>
    </location>
</feature>
<feature type="strand" evidence="18">
    <location>
        <begin position="76"/>
        <end position="81"/>
    </location>
</feature>
<feature type="strand" evidence="17">
    <location>
        <begin position="83"/>
        <end position="86"/>
    </location>
</feature>
<feature type="helix" evidence="14">
    <location>
        <begin position="93"/>
        <end position="96"/>
    </location>
</feature>
<feature type="turn" evidence="20">
    <location>
        <begin position="97"/>
        <end position="99"/>
    </location>
</feature>
<feature type="strand" evidence="19">
    <location>
        <begin position="201"/>
        <end position="203"/>
    </location>
</feature>
<feature type="strand" evidence="15">
    <location>
        <begin position="208"/>
        <end position="213"/>
    </location>
</feature>
<feature type="helix" evidence="15">
    <location>
        <begin position="221"/>
        <end position="229"/>
    </location>
</feature>
<feature type="strand" evidence="15">
    <location>
        <begin position="234"/>
        <end position="238"/>
    </location>
</feature>
<feature type="strand" evidence="15">
    <location>
        <begin position="246"/>
        <end position="253"/>
    </location>
</feature>
<feature type="helix" evidence="15">
    <location>
        <begin position="254"/>
        <end position="263"/>
    </location>
</feature>
<feature type="turn" evidence="15">
    <location>
        <begin position="264"/>
        <end position="266"/>
    </location>
</feature>
<feature type="helix" evidence="15">
    <location>
        <begin position="269"/>
        <end position="271"/>
    </location>
</feature>
<feature type="strand" evidence="19">
    <location>
        <begin position="273"/>
        <end position="279"/>
    </location>
</feature>
<comment type="function">
    <text evidence="5">Component of the spliceosomal U1 snRNP, which is essential for recognition of the pre-mRNA 5' splice-site and the subsequent assembly of the spliceosome. U1 snRNP is the first snRNP to interact with pre-mRNA. This interaction is required for the subsequent binding of U2 snRNP and the U4/U6/U5 tri-snRNP. SNRPA binds stem loop II of U1 snRNA. In a snRNP-free form (SF-A) may be involved in coupled pre-mRNA splicing and polyadenylation process. May bind preferentially to the 5'-UGCAC-3' motif on RNAs.</text>
</comment>
<comment type="subunit">
    <text evidence="4 5">U1 snRNP is composed of the 7 core Sm proteins SNRPB, SNRPD1, SNRPD2, SNRPD3, SNRPE, SNRPF and SNRPG that assemble in a heptameric protein ring on the Sm site of the small nuclear RNA to form the core snRNP, and at least three U1 snRNP-specific proteins SNRNP70/U1-70K, SNRPA/U1-A and SNRPC/U1-C. Interacts with SFPQ; component of a snRNP-free complex with SFPQ. Interacts with IVNS1ABP (via BACK domain); the interaction is indirect (PubMed:30538201).</text>
</comment>
<comment type="interaction">
    <interactant intactId="EBI-607085">
        <id>P09012</id>
    </interactant>
    <interactant intactId="EBI-768015">
        <id>O95400</id>
        <label>CD2BP2</label>
    </interactant>
    <organismsDiffer>false</organismsDiffer>
    <experiments>2</experiments>
</comment>
<comment type="interaction">
    <interactant intactId="EBI-607085">
        <id>P09012</id>
    </interactant>
    <interactant intactId="EBI-11984237">
        <id>Q9Y3Y2-3</id>
        <label>CHTOP</label>
    </interactant>
    <organismsDiffer>false</organismsDiffer>
    <experiments>3</experiments>
</comment>
<comment type="interaction">
    <interactant intactId="EBI-607085">
        <id>P09012</id>
    </interactant>
    <interactant intactId="EBI-538850">
        <id>Q14011</id>
        <label>CIRBP</label>
    </interactant>
    <organismsDiffer>false</organismsDiffer>
    <experiments>4</experiments>
</comment>
<comment type="interaction">
    <interactant intactId="EBI-607085">
        <id>P09012</id>
    </interactant>
    <interactant intactId="EBI-2133162">
        <id>Q96EP5</id>
        <label>DAZAP1</label>
    </interactant>
    <organismsDiffer>false</organismsDiffer>
    <experiments>3</experiments>
</comment>
<comment type="interaction">
    <interactant intactId="EBI-607085">
        <id>P09012</id>
    </interactant>
    <interactant intactId="EBI-742054">
        <id>Q96D03</id>
        <label>DDIT4L</label>
    </interactant>
    <organismsDiffer>false</organismsDiffer>
    <experiments>3</experiments>
</comment>
<comment type="interaction">
    <interactant intactId="EBI-607085">
        <id>P09012</id>
    </interactant>
    <interactant intactId="EBI-348622">
        <id>Q13838</id>
        <label>DDX39B</label>
    </interactant>
    <organismsDiffer>false</organismsDiffer>
    <experiments>4</experiments>
</comment>
<comment type="interaction">
    <interactant intactId="EBI-607085">
        <id>P09012</id>
    </interactant>
    <interactant intactId="EBI-10179508">
        <id>Q16206-2</id>
        <label>ENOX2</label>
    </interactant>
    <organismsDiffer>false</organismsDiffer>
    <experiments>3</experiments>
</comment>
<comment type="interaction">
    <interactant intactId="EBI-607085">
        <id>P09012</id>
    </interactant>
    <interactant intactId="EBI-12121668">
        <id>Q96AE4-2</id>
        <label>FUBP1</label>
    </interactant>
    <organismsDiffer>false</organismsDiffer>
    <experiments>3</experiments>
</comment>
<comment type="interaction">
    <interactant intactId="EBI-607085">
        <id>P09012</id>
    </interactant>
    <interactant intactId="EBI-618165">
        <id>Q06547</id>
        <label>GABPB1</label>
    </interactant>
    <organismsDiffer>false</organismsDiffer>
    <experiments>3</experiments>
</comment>
<comment type="interaction">
    <interactant intactId="EBI-607085">
        <id>P09012</id>
    </interactant>
    <interactant intactId="EBI-947774">
        <id>O75420</id>
        <label>GIGYF1</label>
    </interactant>
    <organismsDiffer>false</organismsDiffer>
    <experiments>3</experiments>
</comment>
<comment type="interaction">
    <interactant intactId="EBI-607085">
        <id>P09012</id>
    </interactant>
    <interactant intactId="EBI-304185">
        <id>P61978</id>
        <label>HNRNPK</label>
    </interactant>
    <organismsDiffer>false</organismsDiffer>
    <experiments>5</experiments>
</comment>
<comment type="interaction">
    <interactant intactId="EBI-607085">
        <id>P09012</id>
    </interactant>
    <interactant intactId="EBI-7060731">
        <id>P61978-2</id>
        <label>HNRNPK</label>
    </interactant>
    <organismsDiffer>false</organismsDiffer>
    <experiments>3</experiments>
</comment>
<comment type="interaction">
    <interactant intactId="EBI-607085">
        <id>P09012</id>
    </interactant>
    <interactant intactId="EBI-351126">
        <id>Q00839</id>
        <label>HNRNPU</label>
    </interactant>
    <organismsDiffer>false</organismsDiffer>
    <experiments>2</experiments>
</comment>
<comment type="interaction">
    <interactant intactId="EBI-607085">
        <id>P09012</id>
    </interactant>
    <interactant intactId="EBI-739546">
        <id>Q96PV6</id>
        <label>LENG8</label>
    </interactant>
    <organismsDiffer>false</organismsDiffer>
    <experiments>9</experiments>
</comment>
<comment type="interaction">
    <interactant intactId="EBI-607085">
        <id>P09012</id>
    </interactant>
    <interactant intactId="EBI-2865388">
        <id>Q969G2</id>
        <label>LHX4</label>
    </interactant>
    <organismsDiffer>false</organismsDiffer>
    <experiments>3</experiments>
</comment>
<comment type="interaction">
    <interactant intactId="EBI-607085">
        <id>P09012</id>
    </interactant>
    <interactant intactId="EBI-739832">
        <id>Q8TBB1</id>
        <label>LNX1</label>
    </interactant>
    <organismsDiffer>false</organismsDiffer>
    <experiments>3</experiments>
</comment>
<comment type="interaction">
    <interactant intactId="EBI-607085">
        <id>P09012</id>
    </interactant>
    <interactant intactId="EBI-13307411">
        <id>Q5VZF2-2</id>
        <label>MBNL2</label>
    </interactant>
    <organismsDiffer>false</organismsDiffer>
    <experiments>3</experiments>
</comment>
<comment type="interaction">
    <interactant intactId="EBI-607085">
        <id>P09012</id>
    </interactant>
    <interactant intactId="EBI-1053295">
        <id>Q8N6R0</id>
        <label>METTL13</label>
    </interactant>
    <organismsDiffer>false</organismsDiffer>
    <experiments>3</experiments>
</comment>
<comment type="interaction">
    <interactant intactId="EBI-607085">
        <id>P09012</id>
    </interactant>
    <interactant intactId="EBI-2371967">
        <id>Q9P015</id>
        <label>MRPL15</label>
    </interactant>
    <organismsDiffer>false</organismsDiffer>
    <experiments>3</experiments>
</comment>
<comment type="interaction">
    <interactant intactId="EBI-607085">
        <id>P09012</id>
    </interactant>
    <interactant intactId="EBI-742948">
        <id>Q5JR59</id>
        <label>MTUS2</label>
    </interactant>
    <organismsDiffer>false</organismsDiffer>
    <experiments>3</experiments>
</comment>
<comment type="interaction">
    <interactant intactId="EBI-607085">
        <id>P09012</id>
    </interactant>
    <interactant intactId="EBI-2114801">
        <id>Q9BU61</id>
        <label>NDUFAF3</label>
    </interactant>
    <organismsDiffer>false</organismsDiffer>
    <experiments>6</experiments>
</comment>
<comment type="interaction">
    <interactant intactId="EBI-607085">
        <id>P09012</id>
    </interactant>
    <interactant intactId="EBI-10298649">
        <id>Q9BU61-2</id>
        <label>NDUFAF3</label>
    </interactant>
    <organismsDiffer>false</organismsDiffer>
    <experiments>3</experiments>
</comment>
<comment type="interaction">
    <interactant intactId="EBI-607085">
        <id>P09012</id>
    </interactant>
    <interactant intactId="EBI-9087860">
        <id>P32243-2</id>
        <label>OTX2</label>
    </interactant>
    <organismsDiffer>false</organismsDiffer>
    <experiments>3</experiments>
</comment>
<comment type="interaction">
    <interactant intactId="EBI-607085">
        <id>P09012</id>
    </interactant>
    <interactant intactId="EBI-946095">
        <id>Q15365</id>
        <label>PCBP1</label>
    </interactant>
    <organismsDiffer>false</organismsDiffer>
    <experiments>9</experiments>
</comment>
<comment type="interaction">
    <interactant intactId="EBI-607085">
        <id>P09012</id>
    </interactant>
    <interactant intactId="EBI-945799">
        <id>Q15366</id>
        <label>PCBP2</label>
    </interactant>
    <organismsDiffer>false</organismsDiffer>
    <experiments>3</experiments>
</comment>
<comment type="interaction">
    <interactant intactId="EBI-607085">
        <id>P09012</id>
    </interactant>
    <interactant intactId="EBI-11983983">
        <id>P57721-2</id>
        <label>PCBP3</label>
    </interactant>
    <organismsDiffer>false</organismsDiffer>
    <experiments>5</experiments>
</comment>
<comment type="interaction">
    <interactant intactId="EBI-607085">
        <id>P09012</id>
    </interactant>
    <interactant intactId="EBI-350540">
        <id>P26599</id>
        <label>PTBP1</label>
    </interactant>
    <organismsDiffer>false</organismsDiffer>
    <experiments>7</experiments>
</comment>
<comment type="interaction">
    <interactant intactId="EBI-607085">
        <id>P09012</id>
    </interactant>
    <interactant intactId="EBI-12255608">
        <id>Q9UKA9-2</id>
        <label>PTBP2</label>
    </interactant>
    <organismsDiffer>false</organismsDiffer>
    <experiments>3</experiments>
</comment>
<comment type="interaction">
    <interactant intactId="EBI-607085">
        <id>P09012</id>
    </interactant>
    <interactant intactId="EBI-945792">
        <id>Q96PU8</id>
        <label>QKI</label>
    </interactant>
    <organismsDiffer>false</organismsDiffer>
    <experiments>4</experiments>
</comment>
<comment type="interaction">
    <interactant intactId="EBI-607085">
        <id>P09012</id>
    </interactant>
    <interactant intactId="EBI-3437896">
        <id>Q86YV0</id>
        <label>RASAL3</label>
    </interactant>
    <organismsDiffer>false</organismsDiffer>
    <experiments>3</experiments>
</comment>
<comment type="interaction">
    <interactant intactId="EBI-607085">
        <id>P09012</id>
    </interactant>
    <interactant intactId="EBI-741332">
        <id>P57052</id>
        <label>RBM11</label>
    </interactant>
    <organismsDiffer>false</organismsDiffer>
    <experiments>3</experiments>
</comment>
<comment type="interaction">
    <interactant intactId="EBI-607085">
        <id>P09012</id>
    </interactant>
    <interactant intactId="EBI-2949699">
        <id>P98179</id>
        <label>RBM3</label>
    </interactant>
    <organismsDiffer>false</organismsDiffer>
    <experiments>8</experiments>
</comment>
<comment type="interaction">
    <interactant intactId="EBI-607085">
        <id>P09012</id>
    </interactant>
    <interactant intactId="EBI-715531">
        <id>Q9BQ04</id>
        <label>RBM4B</label>
    </interactant>
    <organismsDiffer>false</organismsDiffer>
    <experiments>3</experiments>
</comment>
<comment type="interaction">
    <interactant intactId="EBI-607085">
        <id>P09012</id>
    </interactant>
    <interactant intactId="EBI-743526">
        <id>P38159</id>
        <label>RBMX</label>
    </interactant>
    <organismsDiffer>false</organismsDiffer>
    <experiments>4</experiments>
</comment>
<comment type="interaction">
    <interactant intactId="EBI-607085">
        <id>P09012</id>
    </interactant>
    <interactant intactId="EBI-11994018">
        <id>P0DJD3-2</id>
        <label>RBMY1A1</label>
    </interactant>
    <organismsDiffer>false</organismsDiffer>
    <experiments>4</experiments>
</comment>
<comment type="interaction">
    <interactant intactId="EBI-607085">
        <id>P09012</id>
    </interactant>
    <interactant intactId="EBI-8642021">
        <id>Q15415</id>
        <label>RBMY1J</label>
    </interactant>
    <organismsDiffer>false</organismsDiffer>
    <experiments>3</experiments>
</comment>
<comment type="interaction">
    <interactant intactId="EBI-607085">
        <id>P09012</id>
    </interactant>
    <interactant intactId="EBI-11987469">
        <id>Q6ZRY4</id>
        <label>RBPMS2</label>
    </interactant>
    <organismsDiffer>false</organismsDiffer>
    <experiments>6</experiments>
</comment>
<comment type="interaction">
    <interactant intactId="EBI-607085">
        <id>P09012</id>
    </interactant>
    <interactant intactId="EBI-727004">
        <id>O00560</id>
        <label>SDCBP</label>
    </interactant>
    <organismsDiffer>false</organismsDiffer>
    <experiments>3</experiments>
</comment>
<comment type="interaction">
    <interactant intactId="EBI-607085">
        <id>P09012</id>
    </interactant>
    <interactant intactId="EBI-355453">
        <id>P23246</id>
        <label>SFPQ</label>
    </interactant>
    <organismsDiffer>false</organismsDiffer>
    <experiments>5</experiments>
</comment>
<comment type="interaction">
    <interactant intactId="EBI-607085">
        <id>P09012</id>
    </interactant>
    <interactant intactId="EBI-607085">
        <id>P09012</id>
        <label>SNRPA</label>
    </interactant>
    <organismsDiffer>false</organismsDiffer>
    <experiments>8</experiments>
</comment>
<comment type="interaction">
    <interactant intactId="EBI-607085">
        <id>P09012</id>
    </interactant>
    <interactant intactId="EBI-876439">
        <id>P09661</id>
        <label>SNRPA1</label>
    </interactant>
    <organismsDiffer>false</organismsDiffer>
    <experiments>10</experiments>
</comment>
<comment type="interaction">
    <interactant intactId="EBI-607085">
        <id>P09012</id>
    </interactant>
    <interactant intactId="EBI-1387216">
        <id>P31483</id>
        <label>TIA1</label>
    </interactant>
    <organismsDiffer>false</organismsDiffer>
    <experiments>4</experiments>
</comment>
<comment type="interaction">
    <interactant intactId="EBI-607085">
        <id>P09012</id>
    </interactant>
    <interactant intactId="EBI-11064654">
        <id>Q01085-2</id>
        <label>TIAL1</label>
    </interactant>
    <organismsDiffer>false</organismsDiffer>
    <experiments>3</experiments>
</comment>
<comment type="interaction">
    <interactant intactId="EBI-607085">
        <id>P09012</id>
    </interactant>
    <interactant intactId="EBI-11741437">
        <id>Q08117-2</id>
        <label>TLE5</label>
    </interactant>
    <organismsDiffer>false</organismsDiffer>
    <experiments>3</experiments>
</comment>
<comment type="interaction">
    <interactant intactId="EBI-607085">
        <id>P09012</id>
    </interactant>
    <interactant intactId="EBI-752102">
        <id>Q8WVP5</id>
        <label>TNFAIP8L1</label>
    </interactant>
    <organismsDiffer>false</organismsDiffer>
    <experiments>3</experiments>
</comment>
<comment type="interaction">
    <interactant intactId="EBI-607085">
        <id>P09012</id>
    </interactant>
    <interactant intactId="EBI-719493">
        <id>P14373</id>
        <label>TRIM27</label>
    </interactant>
    <organismsDiffer>false</organismsDiffer>
    <experiments>6</experiments>
</comment>
<comment type="interaction">
    <interactant intactId="EBI-607085">
        <id>P09012</id>
    </interactant>
    <interactant intactId="EBI-744881">
        <id>Q9BQ61</id>
        <label>TRIR</label>
    </interactant>
    <organismsDiffer>false</organismsDiffer>
    <experiments>10</experiments>
</comment>
<comment type="interaction">
    <interactant intactId="EBI-607085">
        <id>P09012</id>
    </interactant>
    <interactant intactId="EBI-742339">
        <id>P26368</id>
        <label>U2AF2</label>
    </interactant>
    <organismsDiffer>false</organismsDiffer>
    <experiments>5</experiments>
</comment>
<comment type="interaction">
    <interactant intactId="EBI-607085">
        <id>P09012</id>
    </interactant>
    <interactant intactId="EBI-11097439">
        <id>P26368-2</id>
        <label>U2AF2</label>
    </interactant>
    <organismsDiffer>false</organismsDiffer>
    <experiments>6</experiments>
</comment>
<comment type="interaction">
    <interactant intactId="EBI-607085">
        <id>P09012</id>
    </interactant>
    <interactant intactId="EBI-954111">
        <id>Q8WW36</id>
        <label>ZCCHC13</label>
    </interactant>
    <organismsDiffer>false</organismsDiffer>
    <experiments>3</experiments>
</comment>
<comment type="subcellular location">
    <subcellularLocation>
        <location>Nucleus</location>
    </subcellularLocation>
</comment>
<comment type="similarity">
    <text evidence="7">Belongs to the RRM U1 A/B'' family.</text>
</comment>